<dbReference type="EMBL" id="L42023">
    <property type="protein sequence ID" value="AAC22827.1"/>
    <property type="molecule type" value="Genomic_DNA"/>
</dbReference>
<dbReference type="EMBL" id="U17295">
    <property type="protein sequence ID" value="AAA95981.1"/>
    <property type="molecule type" value="Genomic_DNA"/>
</dbReference>
<dbReference type="PIR" id="I64187">
    <property type="entry name" value="I64187"/>
</dbReference>
<dbReference type="RefSeq" id="NP_439332.2">
    <property type="nucleotide sequence ID" value="NC_000907.1"/>
</dbReference>
<dbReference type="SMR" id="P45088"/>
<dbReference type="STRING" id="71421.HI_1174"/>
<dbReference type="EnsemblBacteria" id="AAC22827">
    <property type="protein sequence ID" value="AAC22827"/>
    <property type="gene ID" value="HI_1174"/>
</dbReference>
<dbReference type="KEGG" id="hin:HI_1174"/>
<dbReference type="PATRIC" id="fig|71421.8.peg.1226"/>
<dbReference type="eggNOG" id="COG3637">
    <property type="taxonomic scope" value="Bacteria"/>
</dbReference>
<dbReference type="HOGENOM" id="CLU_089285_1_0_6"/>
<dbReference type="OrthoDB" id="6648740at2"/>
<dbReference type="Proteomes" id="UP000000579">
    <property type="component" value="Chromosome"/>
</dbReference>
<dbReference type="GO" id="GO:0009279">
    <property type="term" value="C:cell outer membrane"/>
    <property type="evidence" value="ECO:0007669"/>
    <property type="project" value="UniProtKB-ARBA"/>
</dbReference>
<dbReference type="GO" id="GO:0015288">
    <property type="term" value="F:porin activity"/>
    <property type="evidence" value="ECO:0007669"/>
    <property type="project" value="InterPro"/>
</dbReference>
<dbReference type="Gene3D" id="2.40.160.20">
    <property type="match status" value="1"/>
</dbReference>
<dbReference type="InterPro" id="IPR011250">
    <property type="entry name" value="OMP/PagP_b-brl"/>
</dbReference>
<dbReference type="InterPro" id="IPR003394">
    <property type="entry name" value="Porin_opacity"/>
</dbReference>
<dbReference type="Pfam" id="PF02462">
    <property type="entry name" value="Opacity"/>
    <property type="match status" value="1"/>
</dbReference>
<dbReference type="SUPFAM" id="SSF56925">
    <property type="entry name" value="OMPA-like"/>
    <property type="match status" value="1"/>
</dbReference>
<protein>
    <recommendedName>
        <fullName>Protein opa</fullName>
    </recommendedName>
</protein>
<proteinExistence type="inferred from homology"/>
<sequence>MGYKVGNTRVAGDYTHHGKVDGTKIQGLGASVLYDFDTNSKVQPYVGARVATNQFKYTNRAEQKFKSSSDIKLGYGVVAGAKYKLDGNWYANGGVEYNRLGNFDSTKVNNYGAKVGVGYGF</sequence>
<gene>
    <name type="primary">opa</name>
    <name type="ordered locus">HI_1174</name>
</gene>
<feature type="chain" id="PRO_0000058056" description="Protein opa">
    <location>
        <begin position="1"/>
        <end position="121"/>
    </location>
</feature>
<accession>P45088</accession>
<reference key="1">
    <citation type="journal article" date="1995" name="Science">
        <title>Whole-genome random sequencing and assembly of Haemophilus influenzae Rd.</title>
        <authorList>
            <person name="Fleischmann R.D."/>
            <person name="Adams M.D."/>
            <person name="White O."/>
            <person name="Clayton R.A."/>
            <person name="Kirkness E.F."/>
            <person name="Kerlavage A.R."/>
            <person name="Bult C.J."/>
            <person name="Tomb J.-F."/>
            <person name="Dougherty B.A."/>
            <person name="Merrick J.M."/>
            <person name="McKenney K."/>
            <person name="Sutton G.G."/>
            <person name="FitzHugh W."/>
            <person name="Fields C.A."/>
            <person name="Gocayne J.D."/>
            <person name="Scott J.D."/>
            <person name="Shirley R."/>
            <person name="Liu L.-I."/>
            <person name="Glodek A."/>
            <person name="Kelley J.M."/>
            <person name="Weidman J.F."/>
            <person name="Phillips C.A."/>
            <person name="Spriggs T."/>
            <person name="Hedblom E."/>
            <person name="Cotton M.D."/>
            <person name="Utterback T.R."/>
            <person name="Hanna M.C."/>
            <person name="Nguyen D.T."/>
            <person name="Saudek D.M."/>
            <person name="Brandon R.C."/>
            <person name="Fine L.D."/>
            <person name="Fritchman J.L."/>
            <person name="Fuhrmann J.L."/>
            <person name="Geoghagen N.S.M."/>
            <person name="Gnehm C.L."/>
            <person name="McDonald L.A."/>
            <person name="Small K.V."/>
            <person name="Fraser C.M."/>
            <person name="Smith H.O."/>
            <person name="Venter J.C."/>
        </authorList>
    </citation>
    <scope>NUCLEOTIDE SEQUENCE [LARGE SCALE GENOMIC DNA]</scope>
    <source>
        <strain>ATCC 51907 / DSM 11121 / KW20 / Rd</strain>
    </source>
</reference>
<reference key="2">
    <citation type="journal article" date="1996" name="J. Bacteriol.">
        <title>Altered lipopolysaccharide characteristic of the I69 phenotype in Haemophilus influenzae results from mutations in a novel gene, isn.</title>
        <authorList>
            <person name="Preston A."/>
            <person name="Maskell D."/>
            <person name="Johnson A."/>
            <person name="Moxon E.R."/>
        </authorList>
    </citation>
    <scope>NUCLEOTIDE SEQUENCE [GENOMIC DNA] OF 39-121</scope>
    <source>
        <strain>ATCC 51907 / DSM 11121 / KW20 / Rd</strain>
    </source>
</reference>
<evidence type="ECO:0000305" key="1"/>
<name>OPA_HAEIN</name>
<comment type="similarity">
    <text evidence="1">Belongs to the opacity porin family.</text>
</comment>
<organism>
    <name type="scientific">Haemophilus influenzae (strain ATCC 51907 / DSM 11121 / KW20 / Rd)</name>
    <dbReference type="NCBI Taxonomy" id="71421"/>
    <lineage>
        <taxon>Bacteria</taxon>
        <taxon>Pseudomonadati</taxon>
        <taxon>Pseudomonadota</taxon>
        <taxon>Gammaproteobacteria</taxon>
        <taxon>Pasteurellales</taxon>
        <taxon>Pasteurellaceae</taxon>
        <taxon>Haemophilus</taxon>
    </lineage>
</organism>
<keyword id="KW-1185">Reference proteome</keyword>